<reference key="1">
    <citation type="journal article" date="2009" name="Environ. Microbiol.">
        <title>The genome of Polaromonas naphthalenivorans strain CJ2, isolated from coal tar-contaminated sediment, reveals physiological and metabolic versatility and evolution through extensive horizontal gene transfer.</title>
        <authorList>
            <person name="Yagi J.M."/>
            <person name="Sims D."/>
            <person name="Brettin T."/>
            <person name="Bruce D."/>
            <person name="Madsen E.L."/>
        </authorList>
    </citation>
    <scope>NUCLEOTIDE SEQUENCE [LARGE SCALE GENOMIC DNA]</scope>
    <source>
        <strain>CJ2</strain>
    </source>
</reference>
<organism>
    <name type="scientific">Polaromonas naphthalenivorans (strain CJ2)</name>
    <dbReference type="NCBI Taxonomy" id="365044"/>
    <lineage>
        <taxon>Bacteria</taxon>
        <taxon>Pseudomonadati</taxon>
        <taxon>Pseudomonadota</taxon>
        <taxon>Betaproteobacteria</taxon>
        <taxon>Burkholderiales</taxon>
        <taxon>Comamonadaceae</taxon>
        <taxon>Polaromonas</taxon>
    </lineage>
</organism>
<protein>
    <recommendedName>
        <fullName evidence="1">Exodeoxyribonuclease 7 small subunit</fullName>
        <ecNumber evidence="1">3.1.11.6</ecNumber>
    </recommendedName>
    <alternativeName>
        <fullName evidence="1">Exodeoxyribonuclease VII small subunit</fullName>
        <shortName evidence="1">Exonuclease VII small subunit</shortName>
    </alternativeName>
</protein>
<name>EX7S_POLNA</name>
<comment type="function">
    <text evidence="1">Bidirectionally degrades single-stranded DNA into large acid-insoluble oligonucleotides, which are then degraded further into small acid-soluble oligonucleotides.</text>
</comment>
<comment type="catalytic activity">
    <reaction evidence="1">
        <text>Exonucleolytic cleavage in either 5'- to 3'- or 3'- to 5'-direction to yield nucleoside 5'-phosphates.</text>
        <dbReference type="EC" id="3.1.11.6"/>
    </reaction>
</comment>
<comment type="subunit">
    <text evidence="1">Heterooligomer composed of large and small subunits.</text>
</comment>
<comment type="subcellular location">
    <subcellularLocation>
        <location evidence="1">Cytoplasm</location>
    </subcellularLocation>
</comment>
<comment type="similarity">
    <text evidence="1">Belongs to the XseB family.</text>
</comment>
<sequence length="93" mass="9865">MAKSSASSLSSAKPVAAGPDASAPALPVSYEAALQELEGLVSRLESGQLPLDQLLAGYQRGAQLLKFCRDRLEAVETQIKVLEGTELKPWLQA</sequence>
<accession>A1VMD5</accession>
<gene>
    <name evidence="1" type="primary">xseB</name>
    <name type="ordered locus">Pnap_1499</name>
</gene>
<dbReference type="EC" id="3.1.11.6" evidence="1"/>
<dbReference type="EMBL" id="CP000529">
    <property type="protein sequence ID" value="ABM36813.1"/>
    <property type="molecule type" value="Genomic_DNA"/>
</dbReference>
<dbReference type="RefSeq" id="WP_011800900.1">
    <property type="nucleotide sequence ID" value="NC_008781.1"/>
</dbReference>
<dbReference type="SMR" id="A1VMD5"/>
<dbReference type="STRING" id="365044.Pnap_1499"/>
<dbReference type="KEGG" id="pna:Pnap_1499"/>
<dbReference type="eggNOG" id="COG1722">
    <property type="taxonomic scope" value="Bacteria"/>
</dbReference>
<dbReference type="HOGENOM" id="CLU_145918_2_0_4"/>
<dbReference type="Proteomes" id="UP000000644">
    <property type="component" value="Chromosome"/>
</dbReference>
<dbReference type="GO" id="GO:0005829">
    <property type="term" value="C:cytosol"/>
    <property type="evidence" value="ECO:0007669"/>
    <property type="project" value="TreeGrafter"/>
</dbReference>
<dbReference type="GO" id="GO:0009318">
    <property type="term" value="C:exodeoxyribonuclease VII complex"/>
    <property type="evidence" value="ECO:0007669"/>
    <property type="project" value="InterPro"/>
</dbReference>
<dbReference type="GO" id="GO:0008855">
    <property type="term" value="F:exodeoxyribonuclease VII activity"/>
    <property type="evidence" value="ECO:0007669"/>
    <property type="project" value="UniProtKB-UniRule"/>
</dbReference>
<dbReference type="GO" id="GO:0006308">
    <property type="term" value="P:DNA catabolic process"/>
    <property type="evidence" value="ECO:0007669"/>
    <property type="project" value="UniProtKB-UniRule"/>
</dbReference>
<dbReference type="Gene3D" id="1.10.287.1040">
    <property type="entry name" value="Exonuclease VII, small subunit"/>
    <property type="match status" value="1"/>
</dbReference>
<dbReference type="HAMAP" id="MF_00337">
    <property type="entry name" value="Exonuc_7_S"/>
    <property type="match status" value="1"/>
</dbReference>
<dbReference type="InterPro" id="IPR003761">
    <property type="entry name" value="Exonuc_VII_S"/>
</dbReference>
<dbReference type="InterPro" id="IPR037004">
    <property type="entry name" value="Exonuc_VII_ssu_sf"/>
</dbReference>
<dbReference type="NCBIfam" id="TIGR01280">
    <property type="entry name" value="xseB"/>
    <property type="match status" value="1"/>
</dbReference>
<dbReference type="PANTHER" id="PTHR34137">
    <property type="entry name" value="EXODEOXYRIBONUCLEASE 7 SMALL SUBUNIT"/>
    <property type="match status" value="1"/>
</dbReference>
<dbReference type="PANTHER" id="PTHR34137:SF1">
    <property type="entry name" value="EXODEOXYRIBONUCLEASE 7 SMALL SUBUNIT"/>
    <property type="match status" value="1"/>
</dbReference>
<dbReference type="Pfam" id="PF02609">
    <property type="entry name" value="Exonuc_VII_S"/>
    <property type="match status" value="1"/>
</dbReference>
<dbReference type="SUPFAM" id="SSF116842">
    <property type="entry name" value="XseB-like"/>
    <property type="match status" value="1"/>
</dbReference>
<feature type="chain" id="PRO_1000205230" description="Exodeoxyribonuclease 7 small subunit">
    <location>
        <begin position="1"/>
        <end position="93"/>
    </location>
</feature>
<feature type="region of interest" description="Disordered" evidence="2">
    <location>
        <begin position="1"/>
        <end position="22"/>
    </location>
</feature>
<feature type="compositionally biased region" description="Low complexity" evidence="2">
    <location>
        <begin position="1"/>
        <end position="17"/>
    </location>
</feature>
<keyword id="KW-0963">Cytoplasm</keyword>
<keyword id="KW-0269">Exonuclease</keyword>
<keyword id="KW-0378">Hydrolase</keyword>
<keyword id="KW-0540">Nuclease</keyword>
<keyword id="KW-1185">Reference proteome</keyword>
<evidence type="ECO:0000255" key="1">
    <source>
        <dbReference type="HAMAP-Rule" id="MF_00337"/>
    </source>
</evidence>
<evidence type="ECO:0000256" key="2">
    <source>
        <dbReference type="SAM" id="MobiDB-lite"/>
    </source>
</evidence>
<proteinExistence type="inferred from homology"/>